<comment type="function">
    <text evidence="1">Forms part of the ribosomal stalk which helps the ribosome interact with GTP-bound translation factors. Is thus essential for accurate translation.</text>
</comment>
<comment type="subunit">
    <text evidence="1">Homodimer. Part of the ribosomal stalk of the 50S ribosomal subunit. Forms a multimeric L10(L12)X complex, where L10 forms an elongated spine to which 2 to 4 L12 dimers bind in a sequential fashion. Binds GTP-bound translation factors.</text>
</comment>
<comment type="similarity">
    <text evidence="1">Belongs to the bacterial ribosomal protein bL12 family.</text>
</comment>
<keyword id="KW-1185">Reference proteome</keyword>
<keyword id="KW-0687">Ribonucleoprotein</keyword>
<keyword id="KW-0689">Ribosomal protein</keyword>
<name>RL7_CORDI</name>
<proteinExistence type="inferred from homology"/>
<protein>
    <recommendedName>
        <fullName evidence="1">Large ribosomal subunit protein bL12</fullName>
    </recommendedName>
    <alternativeName>
        <fullName evidence="2">50S ribosomal protein L7/L12</fullName>
    </alternativeName>
</protein>
<evidence type="ECO:0000255" key="1">
    <source>
        <dbReference type="HAMAP-Rule" id="MF_00368"/>
    </source>
</evidence>
<evidence type="ECO:0000305" key="2"/>
<accession>Q6NJG5</accession>
<feature type="chain" id="PRO_0000243412" description="Large ribosomal subunit protein bL12">
    <location>
        <begin position="1"/>
        <end position="126"/>
    </location>
</feature>
<gene>
    <name evidence="1" type="primary">rplL</name>
    <name type="ordered locus">DIP0437</name>
</gene>
<organism>
    <name type="scientific">Corynebacterium diphtheriae (strain ATCC 700971 / NCTC 13129 / Biotype gravis)</name>
    <dbReference type="NCBI Taxonomy" id="257309"/>
    <lineage>
        <taxon>Bacteria</taxon>
        <taxon>Bacillati</taxon>
        <taxon>Actinomycetota</taxon>
        <taxon>Actinomycetes</taxon>
        <taxon>Mycobacteriales</taxon>
        <taxon>Corynebacteriaceae</taxon>
        <taxon>Corynebacterium</taxon>
    </lineage>
</organism>
<reference key="1">
    <citation type="journal article" date="2003" name="Nucleic Acids Res.">
        <title>The complete genome sequence and analysis of Corynebacterium diphtheriae NCTC13129.</title>
        <authorList>
            <person name="Cerdeno-Tarraga A.-M."/>
            <person name="Efstratiou A."/>
            <person name="Dover L.G."/>
            <person name="Holden M.T.G."/>
            <person name="Pallen M.J."/>
            <person name="Bentley S.D."/>
            <person name="Besra G.S."/>
            <person name="Churcher C.M."/>
            <person name="James K.D."/>
            <person name="De Zoysa A."/>
            <person name="Chillingworth T."/>
            <person name="Cronin A."/>
            <person name="Dowd L."/>
            <person name="Feltwell T."/>
            <person name="Hamlin N."/>
            <person name="Holroyd S."/>
            <person name="Jagels K."/>
            <person name="Moule S."/>
            <person name="Quail M.A."/>
            <person name="Rabbinowitsch E."/>
            <person name="Rutherford K.M."/>
            <person name="Thomson N.R."/>
            <person name="Unwin L."/>
            <person name="Whitehead S."/>
            <person name="Barrell B.G."/>
            <person name="Parkhill J."/>
        </authorList>
    </citation>
    <scope>NUCLEOTIDE SEQUENCE [LARGE SCALE GENOMIC DNA]</scope>
    <source>
        <strain>ATCC 700971 / NCTC 13129 / Biotype gravis</strain>
    </source>
</reference>
<sequence length="126" mass="13213">MAKLTKDELIEAFKEMTLIELSEFVKEFEEVFEVTAAAPVAVAAAGAAPAAAEEEKTEFDVVLEDAGAKKIGVIKAVRELVSGLGLKEAKELVEGAPKAILEGANKDDAEAAKAKLEEAGAKVTLK</sequence>
<dbReference type="EMBL" id="BX248355">
    <property type="protein sequence ID" value="CAE48942.1"/>
    <property type="molecule type" value="Genomic_DNA"/>
</dbReference>
<dbReference type="RefSeq" id="WP_004566663.1">
    <property type="nucleotide sequence ID" value="NC_002935.2"/>
</dbReference>
<dbReference type="SMR" id="Q6NJG5"/>
<dbReference type="STRING" id="257309.DIP0437"/>
<dbReference type="GeneID" id="97331042"/>
<dbReference type="KEGG" id="cdi:DIP0437"/>
<dbReference type="HOGENOM" id="CLU_086499_3_0_11"/>
<dbReference type="Proteomes" id="UP000002198">
    <property type="component" value="Chromosome"/>
</dbReference>
<dbReference type="GO" id="GO:0022625">
    <property type="term" value="C:cytosolic large ribosomal subunit"/>
    <property type="evidence" value="ECO:0007669"/>
    <property type="project" value="TreeGrafter"/>
</dbReference>
<dbReference type="GO" id="GO:0003729">
    <property type="term" value="F:mRNA binding"/>
    <property type="evidence" value="ECO:0007669"/>
    <property type="project" value="TreeGrafter"/>
</dbReference>
<dbReference type="GO" id="GO:0003735">
    <property type="term" value="F:structural constituent of ribosome"/>
    <property type="evidence" value="ECO:0007669"/>
    <property type="project" value="InterPro"/>
</dbReference>
<dbReference type="GO" id="GO:0006412">
    <property type="term" value="P:translation"/>
    <property type="evidence" value="ECO:0007669"/>
    <property type="project" value="UniProtKB-UniRule"/>
</dbReference>
<dbReference type="CDD" id="cd00387">
    <property type="entry name" value="Ribosomal_L7_L12"/>
    <property type="match status" value="1"/>
</dbReference>
<dbReference type="FunFam" id="1.20.5.710:FF:000005">
    <property type="entry name" value="50S ribosomal protein L7/L12"/>
    <property type="match status" value="1"/>
</dbReference>
<dbReference type="FunFam" id="3.30.1390.10:FF:000001">
    <property type="entry name" value="50S ribosomal protein L7/L12"/>
    <property type="match status" value="1"/>
</dbReference>
<dbReference type="Gene3D" id="3.30.1390.10">
    <property type="match status" value="1"/>
</dbReference>
<dbReference type="Gene3D" id="1.20.5.710">
    <property type="entry name" value="Single helix bin"/>
    <property type="match status" value="1"/>
</dbReference>
<dbReference type="HAMAP" id="MF_00368">
    <property type="entry name" value="Ribosomal_bL12"/>
    <property type="match status" value="1"/>
</dbReference>
<dbReference type="InterPro" id="IPR000206">
    <property type="entry name" value="Ribosomal_bL12"/>
</dbReference>
<dbReference type="InterPro" id="IPR013823">
    <property type="entry name" value="Ribosomal_bL12_C"/>
</dbReference>
<dbReference type="InterPro" id="IPR014719">
    <property type="entry name" value="Ribosomal_bL12_C/ClpS-like"/>
</dbReference>
<dbReference type="InterPro" id="IPR008932">
    <property type="entry name" value="Ribosomal_bL12_oligo"/>
</dbReference>
<dbReference type="InterPro" id="IPR036235">
    <property type="entry name" value="Ribosomal_bL12_oligo_N_sf"/>
</dbReference>
<dbReference type="NCBIfam" id="TIGR00855">
    <property type="entry name" value="L12"/>
    <property type="match status" value="1"/>
</dbReference>
<dbReference type="PANTHER" id="PTHR45987">
    <property type="entry name" value="39S RIBOSOMAL PROTEIN L12"/>
    <property type="match status" value="1"/>
</dbReference>
<dbReference type="PANTHER" id="PTHR45987:SF4">
    <property type="entry name" value="LARGE RIBOSOMAL SUBUNIT PROTEIN BL12M"/>
    <property type="match status" value="1"/>
</dbReference>
<dbReference type="Pfam" id="PF00542">
    <property type="entry name" value="Ribosomal_L12"/>
    <property type="match status" value="1"/>
</dbReference>
<dbReference type="Pfam" id="PF16320">
    <property type="entry name" value="Ribosomal_L12_N"/>
    <property type="match status" value="1"/>
</dbReference>
<dbReference type="SUPFAM" id="SSF54736">
    <property type="entry name" value="ClpS-like"/>
    <property type="match status" value="1"/>
</dbReference>
<dbReference type="SUPFAM" id="SSF48300">
    <property type="entry name" value="Ribosomal protein L7/12, oligomerisation (N-terminal) domain"/>
    <property type="match status" value="1"/>
</dbReference>